<feature type="chain" id="PRO_0000005493" description="Chaperone protein ClpB">
    <location>
        <begin position="1"/>
        <end position="867"/>
    </location>
</feature>
<feature type="domain" description="Clp R" evidence="2">
    <location>
        <begin position="3"/>
        <end position="148"/>
    </location>
</feature>
<feature type="region of interest" description="Repeat 1" evidence="2">
    <location>
        <begin position="6"/>
        <end position="70"/>
    </location>
</feature>
<feature type="region of interest" description="Repeat 2" evidence="2">
    <location>
        <begin position="84"/>
        <end position="148"/>
    </location>
</feature>
<feature type="region of interest" description="NBD1" evidence="1">
    <location>
        <begin position="161"/>
        <end position="342"/>
    </location>
</feature>
<feature type="region of interest" description="Linker" evidence="1">
    <location>
        <begin position="343"/>
        <end position="548"/>
    </location>
</feature>
<feature type="region of interest" description="NBD2" evidence="1">
    <location>
        <begin position="558"/>
        <end position="770"/>
    </location>
</feature>
<feature type="region of interest" description="C-terminal" evidence="1">
    <location>
        <begin position="771"/>
        <end position="867"/>
    </location>
</feature>
<feature type="coiled-coil region" evidence="1">
    <location>
        <begin position="393"/>
        <end position="527"/>
    </location>
</feature>
<feature type="binding site" evidence="1">
    <location>
        <begin position="208"/>
        <end position="215"/>
    </location>
    <ligand>
        <name>ATP</name>
        <dbReference type="ChEBI" id="CHEBI:30616"/>
        <label>1</label>
    </ligand>
</feature>
<feature type="binding site" evidence="1">
    <location>
        <begin position="608"/>
        <end position="615"/>
    </location>
    <ligand>
        <name>ATP</name>
        <dbReference type="ChEBI" id="CHEBI:30616"/>
        <label>2</label>
    </ligand>
</feature>
<feature type="splice variant" id="VSP_018704" description="In isoform ClpB'." evidence="4">
    <location>
        <begin position="1"/>
        <end position="150"/>
    </location>
</feature>
<feature type="splice variant" id="VSP_018705" description="In isoform ClpB'." evidence="4">
    <original>V</original>
    <variation>M</variation>
    <location>
        <position position="151"/>
    </location>
</feature>
<feature type="sequence conflict" description="In Ref. 3; AAD01784." evidence="4" ref="3">
    <original>R</original>
    <variation>C</variation>
    <location>
        <position position="358"/>
    </location>
</feature>
<feature type="sequence conflict" description="In Ref. 1; AAC16900." evidence="4" ref="1">
    <original>V</original>
    <variation>I</variation>
    <location>
        <position position="373"/>
    </location>
</feature>
<gene>
    <name type="primary">clpB</name>
    <name type="ordered locus">llmg_0986</name>
</gene>
<organism>
    <name type="scientific">Lactococcus lactis subsp. cremoris (strain MG1363)</name>
    <dbReference type="NCBI Taxonomy" id="416870"/>
    <lineage>
        <taxon>Bacteria</taxon>
        <taxon>Bacillati</taxon>
        <taxon>Bacillota</taxon>
        <taxon>Bacilli</taxon>
        <taxon>Lactobacillales</taxon>
        <taxon>Streptococcaceae</taxon>
        <taxon>Lactococcus</taxon>
        <taxon>Lactococcus cremoris subsp. cremoris</taxon>
    </lineage>
</organism>
<reference key="1">
    <citation type="thesis" date="1998" institute="University of Cambridge" country="United Kingdom">
        <title>Chaperones and ATP-dependent proteases of Lactococcus lactis.</title>
        <authorList>
            <person name="Coward C."/>
        </authorList>
    </citation>
    <scope>NUCLEOTIDE SEQUENCE [GENOMIC DNA]</scope>
</reference>
<reference key="2">
    <citation type="journal article" date="2007" name="J. Bacteriol.">
        <title>The complete genome sequence of the lactic acid bacterial paradigm Lactococcus lactis subsp. cremoris MG1363.</title>
        <authorList>
            <person name="Wegmann U."/>
            <person name="O'Connell-Motherway M."/>
            <person name="Zomer A."/>
            <person name="Buist G."/>
            <person name="Shearman C."/>
            <person name="Canchaya C."/>
            <person name="Ventura M."/>
            <person name="Goesmann A."/>
            <person name="Gasson M.J."/>
            <person name="Kuipers O.P."/>
            <person name="van Sinderen D."/>
            <person name="Kok J."/>
        </authorList>
    </citation>
    <scope>NUCLEOTIDE SEQUENCE [LARGE SCALE GENOMIC DNA]</scope>
    <source>
        <strain>MG1363</strain>
    </source>
</reference>
<reference key="3">
    <citation type="journal article" date="1999" name="J. Bacteriol.">
        <title>Disruption and analysis of the clpB, clpC, and clpE genes in Lactococcus lactis: clpE, a new Clp family in Gram-positive bacteria.</title>
        <authorList>
            <person name="Ingmer H."/>
            <person name="Vogensen F.K."/>
            <person name="Hammer K."/>
            <person name="Kilstrup M."/>
        </authorList>
    </citation>
    <scope>NUCLEOTIDE SEQUENCE [GENOMIC DNA] OF 208-392</scope>
    <scope>ALTERNATIVE INITIATION</scope>
    <scope>INDUCTION</scope>
</reference>
<protein>
    <recommendedName>
        <fullName>Chaperone protein ClpB</fullName>
    </recommendedName>
</protein>
<name>CLPB_LACLM</name>
<dbReference type="EMBL" id="AF016634">
    <property type="protein sequence ID" value="AAC16900.1"/>
    <property type="molecule type" value="Genomic_DNA"/>
</dbReference>
<dbReference type="EMBL" id="AM406671">
    <property type="protein sequence ID" value="CAL97579.1"/>
    <property type="molecule type" value="Genomic_DNA"/>
</dbReference>
<dbReference type="EMBL" id="AF023423">
    <property type="protein sequence ID" value="AAD01784.1"/>
    <property type="molecule type" value="Genomic_DNA"/>
</dbReference>
<dbReference type="RefSeq" id="WP_011834922.1">
    <molecule id="O68185-1"/>
    <property type="nucleotide sequence ID" value="NC_009004.1"/>
</dbReference>
<dbReference type="SMR" id="O68185"/>
<dbReference type="STRING" id="416870.llmg_0986"/>
<dbReference type="KEGG" id="llm:llmg_0986"/>
<dbReference type="eggNOG" id="COG0542">
    <property type="taxonomic scope" value="Bacteria"/>
</dbReference>
<dbReference type="HOGENOM" id="CLU_005070_4_2_9"/>
<dbReference type="OrthoDB" id="9803641at2"/>
<dbReference type="PhylomeDB" id="O68185"/>
<dbReference type="Proteomes" id="UP000000364">
    <property type="component" value="Chromosome"/>
</dbReference>
<dbReference type="GO" id="GO:0005737">
    <property type="term" value="C:cytoplasm"/>
    <property type="evidence" value="ECO:0007669"/>
    <property type="project" value="UniProtKB-SubCell"/>
</dbReference>
<dbReference type="GO" id="GO:0005524">
    <property type="term" value="F:ATP binding"/>
    <property type="evidence" value="ECO:0007669"/>
    <property type="project" value="UniProtKB-KW"/>
</dbReference>
<dbReference type="GO" id="GO:0016887">
    <property type="term" value="F:ATP hydrolysis activity"/>
    <property type="evidence" value="ECO:0007669"/>
    <property type="project" value="InterPro"/>
</dbReference>
<dbReference type="GO" id="GO:0034605">
    <property type="term" value="P:cellular response to heat"/>
    <property type="evidence" value="ECO:0007669"/>
    <property type="project" value="TreeGrafter"/>
</dbReference>
<dbReference type="GO" id="GO:0042026">
    <property type="term" value="P:protein refolding"/>
    <property type="evidence" value="ECO:0007669"/>
    <property type="project" value="InterPro"/>
</dbReference>
<dbReference type="CDD" id="cd00009">
    <property type="entry name" value="AAA"/>
    <property type="match status" value="1"/>
</dbReference>
<dbReference type="CDD" id="cd19499">
    <property type="entry name" value="RecA-like_ClpB_Hsp104-like"/>
    <property type="match status" value="1"/>
</dbReference>
<dbReference type="FunFam" id="3.40.50.300:FF:000120">
    <property type="entry name" value="ATP-dependent chaperone ClpB"/>
    <property type="match status" value="1"/>
</dbReference>
<dbReference type="FunFam" id="3.40.50.300:FF:000025">
    <property type="entry name" value="ATP-dependent Clp protease subunit"/>
    <property type="match status" value="1"/>
</dbReference>
<dbReference type="FunFam" id="3.40.50.300:FF:000010">
    <property type="entry name" value="Chaperone clpB 1, putative"/>
    <property type="match status" value="1"/>
</dbReference>
<dbReference type="Gene3D" id="1.10.8.60">
    <property type="match status" value="1"/>
</dbReference>
<dbReference type="Gene3D" id="1.10.1780.10">
    <property type="entry name" value="Clp, N-terminal domain"/>
    <property type="match status" value="1"/>
</dbReference>
<dbReference type="Gene3D" id="3.40.50.300">
    <property type="entry name" value="P-loop containing nucleotide triphosphate hydrolases"/>
    <property type="match status" value="3"/>
</dbReference>
<dbReference type="InterPro" id="IPR003593">
    <property type="entry name" value="AAA+_ATPase"/>
</dbReference>
<dbReference type="InterPro" id="IPR003959">
    <property type="entry name" value="ATPase_AAA_core"/>
</dbReference>
<dbReference type="InterPro" id="IPR017730">
    <property type="entry name" value="Chaperonin_ClpB"/>
</dbReference>
<dbReference type="InterPro" id="IPR019489">
    <property type="entry name" value="Clp_ATPase_C"/>
</dbReference>
<dbReference type="InterPro" id="IPR036628">
    <property type="entry name" value="Clp_N_dom_sf"/>
</dbReference>
<dbReference type="InterPro" id="IPR004176">
    <property type="entry name" value="Clp_R_dom"/>
</dbReference>
<dbReference type="InterPro" id="IPR001270">
    <property type="entry name" value="ClpA/B"/>
</dbReference>
<dbReference type="InterPro" id="IPR018368">
    <property type="entry name" value="ClpA/B_CS1"/>
</dbReference>
<dbReference type="InterPro" id="IPR028299">
    <property type="entry name" value="ClpA/B_CS2"/>
</dbReference>
<dbReference type="InterPro" id="IPR041546">
    <property type="entry name" value="ClpA/ClpB_AAA_lid"/>
</dbReference>
<dbReference type="InterPro" id="IPR050130">
    <property type="entry name" value="ClpA_ClpB"/>
</dbReference>
<dbReference type="InterPro" id="IPR027417">
    <property type="entry name" value="P-loop_NTPase"/>
</dbReference>
<dbReference type="NCBIfam" id="TIGR03346">
    <property type="entry name" value="chaperone_ClpB"/>
    <property type="match status" value="1"/>
</dbReference>
<dbReference type="PANTHER" id="PTHR11638">
    <property type="entry name" value="ATP-DEPENDENT CLP PROTEASE"/>
    <property type="match status" value="1"/>
</dbReference>
<dbReference type="PANTHER" id="PTHR11638:SF18">
    <property type="entry name" value="HEAT SHOCK PROTEIN 104"/>
    <property type="match status" value="1"/>
</dbReference>
<dbReference type="Pfam" id="PF00004">
    <property type="entry name" value="AAA"/>
    <property type="match status" value="1"/>
</dbReference>
<dbReference type="Pfam" id="PF07724">
    <property type="entry name" value="AAA_2"/>
    <property type="match status" value="1"/>
</dbReference>
<dbReference type="Pfam" id="PF17871">
    <property type="entry name" value="AAA_lid_9"/>
    <property type="match status" value="1"/>
</dbReference>
<dbReference type="Pfam" id="PF02861">
    <property type="entry name" value="Clp_N"/>
    <property type="match status" value="2"/>
</dbReference>
<dbReference type="Pfam" id="PF10431">
    <property type="entry name" value="ClpB_D2-small"/>
    <property type="match status" value="1"/>
</dbReference>
<dbReference type="PRINTS" id="PR00300">
    <property type="entry name" value="CLPPROTEASEA"/>
</dbReference>
<dbReference type="SMART" id="SM00382">
    <property type="entry name" value="AAA"/>
    <property type="match status" value="2"/>
</dbReference>
<dbReference type="SMART" id="SM01086">
    <property type="entry name" value="ClpB_D2-small"/>
    <property type="match status" value="1"/>
</dbReference>
<dbReference type="SUPFAM" id="SSF81923">
    <property type="entry name" value="Double Clp-N motif"/>
    <property type="match status" value="1"/>
</dbReference>
<dbReference type="SUPFAM" id="SSF52540">
    <property type="entry name" value="P-loop containing nucleoside triphosphate hydrolases"/>
    <property type="match status" value="2"/>
</dbReference>
<dbReference type="PROSITE" id="PS51903">
    <property type="entry name" value="CLP_R"/>
    <property type="match status" value="1"/>
</dbReference>
<dbReference type="PROSITE" id="PS00870">
    <property type="entry name" value="CLPAB_1"/>
    <property type="match status" value="1"/>
</dbReference>
<dbReference type="PROSITE" id="PS00871">
    <property type="entry name" value="CLPAB_2"/>
    <property type="match status" value="1"/>
</dbReference>
<proteinExistence type="evidence at transcript level"/>
<accession>O68185</accession>
<accession>A2RJX3</accession>
<accession>Q9S5Z3</accession>
<keyword id="KW-0024">Alternative initiation</keyword>
<keyword id="KW-0067">ATP-binding</keyword>
<keyword id="KW-0143">Chaperone</keyword>
<keyword id="KW-0175">Coiled coil</keyword>
<keyword id="KW-0963">Cytoplasm</keyword>
<keyword id="KW-0547">Nucleotide-binding</keyword>
<keyword id="KW-0677">Repeat</keyword>
<keyword id="KW-0346">Stress response</keyword>
<comment type="function">
    <text evidence="1">Part of a stress-induced multi-chaperone system, it is involved in the recovery of the cell from heat-induced damage, in cooperation with DnaK, DnaJ and GrpE. Acts before DnaK, in the processing of protein aggregates. Protein binding stimulates the ATPase activity; ATP hydrolysis unfolds the denatured protein aggregates, which probably helps expose new hydrophobic binding sites on the surface of ClpB-bound aggregates, contributing to the solubilization and refolding of denatured protein aggregates by DnaK (By similarity).</text>
</comment>
<comment type="subunit">
    <text evidence="1">Homohexamer. The oligomerization is ATP-dependent (By similarity).</text>
</comment>
<comment type="subcellular location">
    <subcellularLocation>
        <location evidence="4">Cytoplasm</location>
    </subcellularLocation>
</comment>
<comment type="alternative products">
    <event type="alternative initiation"/>
    <isoform>
        <id>O68185-1</id>
        <name>ClpB</name>
        <sequence type="displayed"/>
    </isoform>
    <isoform>
        <id>O68185-2</id>
        <name>ClpB'</name>
        <sequence type="described" ref="VSP_018704 VSP_018705"/>
    </isoform>
</comment>
<comment type="induction">
    <text evidence="3">By heat shock.</text>
</comment>
<comment type="domain">
    <text evidence="1">The Clp repeat (R) domain probably functions as a substrate-discriminating domain, recruiting aggregated proteins to the ClpB hexamer and/or stabilizing bound proteins. The NBD2 domain is responsible for oligomerization, whereas the NBD1 domain stabilizes the hexamer probably in an ATP-dependent manner. The movement of the coiled-coil domain is essential for ClpB ability to rescue proteins from an aggregated state, probably by pulling apart large aggregated proteins, which are bound between the coiled-coils motifs of adjacent ClpB subunits in the functional hexamer (By similarity).</text>
</comment>
<comment type="similarity">
    <text evidence="4">Belongs to the ClpA/ClpB family.</text>
</comment>
<sequence length="867" mass="97327">MDIEKMTTTMQEALGSAQQIAQVRHHQVIEVPHLWRIFVQPNSFGANFYKDLGIDLDDFTNLIEKEIDKINSVEGSNITYGQNLSPDLFQVFTEADKIAQKMGDEYLSTEIILLALFELKQNPLTEYLVSHGLTKAKAQAAIEKLRGGDKVTSQNAEETYKALEKYGVDLVAQVKSGNQDPVIGRDEEIRDVIRVLSRKTKNNPVLIGEPGVGKTAIVEGLAQRIVRKDVPENLKDKTIFSLDMGALIAGAKYRGEFEERLKAVLNEVKKADGQIILFIDELHTIVGAGKTEGSMDAGNLLKPMLARGELHLIGATTLDEYRKYMETDKALERRFQKVLVTEPTVEDTISILRGLKERFEIHHGVTIHDNALVAAATLSNRYITDRFLPDKAIDLIDEASATIRVEMNSLPTELDQANRRLMQLEIEEAALKKERDDASKKRLEIIRGEIAELREENNQLKAQWEAEKKEVGNISEKRNELEHARHELEEAQNEGNLEKAAALRYGKIPEIEKELKAIEEKAKSDDLSLVQESVTEEQIAEVVGRMTGIPITKLVEGEREKLLHLPETLHQRVVGQDEAVEAVSDAIIRARAGIQDPNRPLGSFLFLGPTGVGKTELAKALAENLFDSEEHMVRIDMSEYMEKHSVSRLVGAPPGYVGYDEGGQLTEAVRRNPYTIILLDEIEKAHPDVFNILLQVLDDGRLTDSKGVLVDFKNTVLIMTSNVGSQYLLDNVGENGEISEETTENVMSQLRAHFKPEFLNRIDDTILFKPLALEDIKNIILKMTSQLAHRLEEMEVELELSEEVKVWIAENAYEPAYGARPLKRYLTKVIENPLAKLIIGGKIPPKSKVIVRLIDNKVDFDVQSIAE</sequence>
<evidence type="ECO:0000250" key="1"/>
<evidence type="ECO:0000255" key="2">
    <source>
        <dbReference type="PROSITE-ProRule" id="PRU01251"/>
    </source>
</evidence>
<evidence type="ECO:0000269" key="3">
    <source>
    </source>
</evidence>
<evidence type="ECO:0000305" key="4"/>